<evidence type="ECO:0000255" key="1"/>
<evidence type="ECO:0000256" key="2">
    <source>
        <dbReference type="SAM" id="MobiDB-lite"/>
    </source>
</evidence>
<evidence type="ECO:0000305" key="3"/>
<protein>
    <recommendedName>
        <fullName>Uncharacterized protein YjbT</fullName>
    </recommendedName>
</protein>
<keyword id="KW-1185">Reference proteome</keyword>
<keyword id="KW-0732">Signal</keyword>
<sequence>MKRNLIKVVKMKPYFAALMLSVSVLPAYAGPLGTADKADLPQSNVSSPMMAQSLRQPDLQPISTDRKTECFRLYTPDRKPGVNCVPDGSTGH</sequence>
<gene>
    <name type="primary">yjbT</name>
    <name type="ordered locus">b4620</name>
</gene>
<comment type="similarity">
    <text evidence="3">Belongs to the YjbT family.</text>
</comment>
<feature type="signal peptide" evidence="1">
    <location>
        <begin position="1"/>
        <end position="29"/>
    </location>
</feature>
<feature type="chain" id="PRO_0000311863" description="Uncharacterized protein YjbT">
    <location>
        <begin position="30"/>
        <end position="92"/>
    </location>
</feature>
<feature type="region of interest" description="Disordered" evidence="2">
    <location>
        <begin position="36"/>
        <end position="62"/>
    </location>
</feature>
<feature type="compositionally biased region" description="Polar residues" evidence="2">
    <location>
        <begin position="41"/>
        <end position="55"/>
    </location>
</feature>
<organism>
    <name type="scientific">Escherichia coli (strain K12)</name>
    <dbReference type="NCBI Taxonomy" id="83333"/>
    <lineage>
        <taxon>Bacteria</taxon>
        <taxon>Pseudomonadati</taxon>
        <taxon>Pseudomonadota</taxon>
        <taxon>Gammaproteobacteria</taxon>
        <taxon>Enterobacterales</taxon>
        <taxon>Enterobacteriaceae</taxon>
        <taxon>Escherichia</taxon>
    </lineage>
</organism>
<name>YJBT_ECOLI</name>
<proteinExistence type="inferred from homology"/>
<accession>A5A628</accession>
<reference key="1">
    <citation type="journal article" date="1997" name="Science">
        <title>The complete genome sequence of Escherichia coli K-12.</title>
        <authorList>
            <person name="Blattner F.R."/>
            <person name="Plunkett G. III"/>
            <person name="Bloch C.A."/>
            <person name="Perna N.T."/>
            <person name="Burland V."/>
            <person name="Riley M."/>
            <person name="Collado-Vides J."/>
            <person name="Glasner J.D."/>
            <person name="Rode C.K."/>
            <person name="Mayhew G.F."/>
            <person name="Gregor J."/>
            <person name="Davis N.W."/>
            <person name="Kirkpatrick H.A."/>
            <person name="Goeden M.A."/>
            <person name="Rose D.J."/>
            <person name="Mau B."/>
            <person name="Shao Y."/>
        </authorList>
    </citation>
    <scope>NUCLEOTIDE SEQUENCE [LARGE SCALE GENOMIC DNA]</scope>
    <source>
        <strain>K12 / MG1655 / ATCC 47076</strain>
    </source>
</reference>
<dbReference type="EMBL" id="U00096">
    <property type="protein sequence ID" value="ABP93457.1"/>
    <property type="molecule type" value="Genomic_DNA"/>
</dbReference>
<dbReference type="RefSeq" id="WP_001295279.1">
    <property type="nucleotide sequence ID" value="NZ_STEB01000022.1"/>
</dbReference>
<dbReference type="RefSeq" id="YP_001165332.1">
    <property type="nucleotide sequence ID" value="NC_000913.3"/>
</dbReference>
<dbReference type="STRING" id="511145.b4620"/>
<dbReference type="PaxDb" id="511145-b4620"/>
<dbReference type="EnsemblBacteria" id="ABP93457">
    <property type="protein sequence ID" value="ABP93457"/>
    <property type="gene ID" value="b4620"/>
</dbReference>
<dbReference type="GeneID" id="5061528"/>
<dbReference type="KEGG" id="eco:b4620"/>
<dbReference type="KEGG" id="ecoc:C3026_21765"/>
<dbReference type="PATRIC" id="fig|83333.103.peg.324"/>
<dbReference type="eggNOG" id="ENOG5031KSJ">
    <property type="taxonomic scope" value="Bacteria"/>
</dbReference>
<dbReference type="InParanoid" id="A5A628"/>
<dbReference type="OrthoDB" id="6570609at2"/>
<dbReference type="BioCyc" id="EcoCyc:MONOMER0-2828"/>
<dbReference type="PRO" id="PR:A5A628"/>
<dbReference type="Proteomes" id="UP000000625">
    <property type="component" value="Chromosome"/>
</dbReference>
<dbReference type="InterPro" id="IPR031382">
    <property type="entry name" value="YjbT"/>
</dbReference>
<dbReference type="Pfam" id="PF17089">
    <property type="entry name" value="YjbT"/>
    <property type="match status" value="1"/>
</dbReference>